<dbReference type="EMBL" id="CU329671">
    <property type="protein sequence ID" value="CAA18897.1"/>
    <property type="molecule type" value="Genomic_DNA"/>
</dbReference>
<dbReference type="RefSeq" id="NP_595926.1">
    <property type="nucleotide sequence ID" value="NM_001021834.2"/>
</dbReference>
<dbReference type="SMR" id="Q1MTR5"/>
<dbReference type="BioGRID" id="276337">
    <property type="interactions" value="55"/>
</dbReference>
<dbReference type="FunCoup" id="Q1MTR5">
    <property type="interactions" value="421"/>
</dbReference>
<dbReference type="STRING" id="284812.Q1MTR5"/>
<dbReference type="iPTMnet" id="Q1MTR5"/>
<dbReference type="PaxDb" id="4896-SPBC15C4.06c.1"/>
<dbReference type="EnsemblFungi" id="SPBC15C4.06c.1">
    <property type="protein sequence ID" value="SPBC15C4.06c.1:pep"/>
    <property type="gene ID" value="SPBC15C4.06c"/>
</dbReference>
<dbReference type="KEGG" id="spo:2539787"/>
<dbReference type="PomBase" id="SPBC15C4.06c"/>
<dbReference type="VEuPathDB" id="FungiDB:SPBC15C4.06c"/>
<dbReference type="eggNOG" id="KOG0800">
    <property type="taxonomic scope" value="Eukaryota"/>
</dbReference>
<dbReference type="HOGENOM" id="CLU_490160_0_0_1"/>
<dbReference type="InParanoid" id="Q1MTR5"/>
<dbReference type="OMA" id="NISDKCP"/>
<dbReference type="PRO" id="PR:Q1MTR5"/>
<dbReference type="Proteomes" id="UP000002485">
    <property type="component" value="Chromosome II"/>
</dbReference>
<dbReference type="GO" id="GO:0032153">
    <property type="term" value="C:cell division site"/>
    <property type="evidence" value="ECO:0007005"/>
    <property type="project" value="PomBase"/>
</dbReference>
<dbReference type="GO" id="GO:0051286">
    <property type="term" value="C:cell tip"/>
    <property type="evidence" value="ECO:0007005"/>
    <property type="project" value="PomBase"/>
</dbReference>
<dbReference type="GO" id="GO:0005737">
    <property type="term" value="C:cytoplasm"/>
    <property type="evidence" value="ECO:0000318"/>
    <property type="project" value="GO_Central"/>
</dbReference>
<dbReference type="GO" id="GO:0000324">
    <property type="term" value="C:fungal-type vacuole"/>
    <property type="evidence" value="ECO:0007005"/>
    <property type="project" value="PomBase"/>
</dbReference>
<dbReference type="GO" id="GO:0005886">
    <property type="term" value="C:plasma membrane"/>
    <property type="evidence" value="ECO:0007669"/>
    <property type="project" value="UniProtKB-SubCell"/>
</dbReference>
<dbReference type="GO" id="GO:0005774">
    <property type="term" value="C:vacuolar membrane"/>
    <property type="evidence" value="ECO:0007669"/>
    <property type="project" value="UniProtKB-SubCell"/>
</dbReference>
<dbReference type="GO" id="GO:0016874">
    <property type="term" value="F:ligase activity"/>
    <property type="evidence" value="ECO:0007669"/>
    <property type="project" value="UniProtKB-KW"/>
</dbReference>
<dbReference type="GO" id="GO:0061630">
    <property type="term" value="F:ubiquitin protein ligase activity"/>
    <property type="evidence" value="ECO:0000318"/>
    <property type="project" value="GO_Central"/>
</dbReference>
<dbReference type="GO" id="GO:0008270">
    <property type="term" value="F:zinc ion binding"/>
    <property type="evidence" value="ECO:0000255"/>
    <property type="project" value="PomBase"/>
</dbReference>
<dbReference type="GO" id="GO:0006511">
    <property type="term" value="P:ubiquitin-dependent protein catabolic process"/>
    <property type="evidence" value="ECO:0000318"/>
    <property type="project" value="GO_Central"/>
</dbReference>
<dbReference type="CDD" id="cd16454">
    <property type="entry name" value="RING-H2_PA-TM-RING"/>
    <property type="match status" value="1"/>
</dbReference>
<dbReference type="Gene3D" id="3.30.40.10">
    <property type="entry name" value="Zinc/RING finger domain, C3HC4 (zinc finger)"/>
    <property type="match status" value="1"/>
</dbReference>
<dbReference type="InterPro" id="IPR051834">
    <property type="entry name" value="RING_finger_E3_ligase"/>
</dbReference>
<dbReference type="InterPro" id="IPR001841">
    <property type="entry name" value="Znf_RING"/>
</dbReference>
<dbReference type="InterPro" id="IPR013083">
    <property type="entry name" value="Znf_RING/FYVE/PHD"/>
</dbReference>
<dbReference type="PANTHER" id="PTHR45931:SF3">
    <property type="entry name" value="RING ZINC FINGER-CONTAINING PROTEIN"/>
    <property type="match status" value="1"/>
</dbReference>
<dbReference type="PANTHER" id="PTHR45931">
    <property type="entry name" value="SI:CH211-59O9.10"/>
    <property type="match status" value="1"/>
</dbReference>
<dbReference type="Pfam" id="PF13639">
    <property type="entry name" value="zf-RING_2"/>
    <property type="match status" value="1"/>
</dbReference>
<dbReference type="SMART" id="SM00184">
    <property type="entry name" value="RING"/>
    <property type="match status" value="1"/>
</dbReference>
<dbReference type="SUPFAM" id="SSF57850">
    <property type="entry name" value="RING/U-box"/>
    <property type="match status" value="1"/>
</dbReference>
<dbReference type="PROSITE" id="PS50089">
    <property type="entry name" value="ZF_RING_2"/>
    <property type="match status" value="1"/>
</dbReference>
<accession>Q1MTR5</accession>
<name>YG66_SCHPO</name>
<reference key="1">
    <citation type="journal article" date="2002" name="Nature">
        <title>The genome sequence of Schizosaccharomyces pombe.</title>
        <authorList>
            <person name="Wood V."/>
            <person name="Gwilliam R."/>
            <person name="Rajandream M.A."/>
            <person name="Lyne M.H."/>
            <person name="Lyne R."/>
            <person name="Stewart A."/>
            <person name="Sgouros J.G."/>
            <person name="Peat N."/>
            <person name="Hayles J."/>
            <person name="Baker S.G."/>
            <person name="Basham D."/>
            <person name="Bowman S."/>
            <person name="Brooks K."/>
            <person name="Brown D."/>
            <person name="Brown S."/>
            <person name="Chillingworth T."/>
            <person name="Churcher C.M."/>
            <person name="Collins M."/>
            <person name="Connor R."/>
            <person name="Cronin A."/>
            <person name="Davis P."/>
            <person name="Feltwell T."/>
            <person name="Fraser A."/>
            <person name="Gentles S."/>
            <person name="Goble A."/>
            <person name="Hamlin N."/>
            <person name="Harris D.E."/>
            <person name="Hidalgo J."/>
            <person name="Hodgson G."/>
            <person name="Holroyd S."/>
            <person name="Hornsby T."/>
            <person name="Howarth S."/>
            <person name="Huckle E.J."/>
            <person name="Hunt S."/>
            <person name="Jagels K."/>
            <person name="James K.D."/>
            <person name="Jones L."/>
            <person name="Jones M."/>
            <person name="Leather S."/>
            <person name="McDonald S."/>
            <person name="McLean J."/>
            <person name="Mooney P."/>
            <person name="Moule S."/>
            <person name="Mungall K.L."/>
            <person name="Murphy L.D."/>
            <person name="Niblett D."/>
            <person name="Odell C."/>
            <person name="Oliver K."/>
            <person name="O'Neil S."/>
            <person name="Pearson D."/>
            <person name="Quail M.A."/>
            <person name="Rabbinowitsch E."/>
            <person name="Rutherford K.M."/>
            <person name="Rutter S."/>
            <person name="Saunders D."/>
            <person name="Seeger K."/>
            <person name="Sharp S."/>
            <person name="Skelton J."/>
            <person name="Simmonds M.N."/>
            <person name="Squares R."/>
            <person name="Squares S."/>
            <person name="Stevens K."/>
            <person name="Taylor K."/>
            <person name="Taylor R.G."/>
            <person name="Tivey A."/>
            <person name="Walsh S.V."/>
            <person name="Warren T."/>
            <person name="Whitehead S."/>
            <person name="Woodward J.R."/>
            <person name="Volckaert G."/>
            <person name="Aert R."/>
            <person name="Robben J."/>
            <person name="Grymonprez B."/>
            <person name="Weltjens I."/>
            <person name="Vanstreels E."/>
            <person name="Rieger M."/>
            <person name="Schaefer M."/>
            <person name="Mueller-Auer S."/>
            <person name="Gabel C."/>
            <person name="Fuchs M."/>
            <person name="Duesterhoeft A."/>
            <person name="Fritzc C."/>
            <person name="Holzer E."/>
            <person name="Moestl D."/>
            <person name="Hilbert H."/>
            <person name="Borzym K."/>
            <person name="Langer I."/>
            <person name="Beck A."/>
            <person name="Lehrach H."/>
            <person name="Reinhardt R."/>
            <person name="Pohl T.M."/>
            <person name="Eger P."/>
            <person name="Zimmermann W."/>
            <person name="Wedler H."/>
            <person name="Wambutt R."/>
            <person name="Purnelle B."/>
            <person name="Goffeau A."/>
            <person name="Cadieu E."/>
            <person name="Dreano S."/>
            <person name="Gloux S."/>
            <person name="Lelaure V."/>
            <person name="Mottier S."/>
            <person name="Galibert F."/>
            <person name="Aves S.J."/>
            <person name="Xiang Z."/>
            <person name="Hunt C."/>
            <person name="Moore K."/>
            <person name="Hurst S.M."/>
            <person name="Lucas M."/>
            <person name="Rochet M."/>
            <person name="Gaillardin C."/>
            <person name="Tallada V.A."/>
            <person name="Garzon A."/>
            <person name="Thode G."/>
            <person name="Daga R.R."/>
            <person name="Cruzado L."/>
            <person name="Jimenez J."/>
            <person name="Sanchez M."/>
            <person name="del Rey F."/>
            <person name="Benito J."/>
            <person name="Dominguez A."/>
            <person name="Revuelta J.L."/>
            <person name="Moreno S."/>
            <person name="Armstrong J."/>
            <person name="Forsburg S.L."/>
            <person name="Cerutti L."/>
            <person name="Lowe T."/>
            <person name="McCombie W.R."/>
            <person name="Paulsen I."/>
            <person name="Potashkin J."/>
            <person name="Shpakovski G.V."/>
            <person name="Ussery D."/>
            <person name="Barrell B.G."/>
            <person name="Nurse P."/>
        </authorList>
    </citation>
    <scope>NUCLEOTIDE SEQUENCE [LARGE SCALE GENOMIC DNA]</scope>
    <source>
        <strain>972 / ATCC 24843</strain>
    </source>
</reference>
<reference key="2">
    <citation type="journal article" date="2006" name="Nat. Biotechnol.">
        <title>ORFeome cloning and global analysis of protein localization in the fission yeast Schizosaccharomyces pombe.</title>
        <authorList>
            <person name="Matsuyama A."/>
            <person name="Arai R."/>
            <person name="Yashiroda Y."/>
            <person name="Shirai A."/>
            <person name="Kamata A."/>
            <person name="Sekido S."/>
            <person name="Kobayashi Y."/>
            <person name="Hashimoto A."/>
            <person name="Hamamoto M."/>
            <person name="Hiraoka Y."/>
            <person name="Horinouchi S."/>
            <person name="Yoshida M."/>
        </authorList>
    </citation>
    <scope>SUBCELLULAR LOCATION [LARGE SCALE ANALYSIS]</scope>
</reference>
<feature type="chain" id="PRO_0000352823" description="Uncharacterized RING finger membrane protein C15C4.06c">
    <location>
        <begin position="1"/>
        <end position="556"/>
    </location>
</feature>
<feature type="transmembrane region" description="Helical" evidence="1">
    <location>
        <begin position="379"/>
        <end position="399"/>
    </location>
</feature>
<feature type="zinc finger region" description="RING-type; atypical" evidence="2">
    <location>
        <begin position="498"/>
        <end position="541"/>
    </location>
</feature>
<feature type="region of interest" description="Disordered" evidence="3">
    <location>
        <begin position="69"/>
        <end position="129"/>
    </location>
</feature>
<feature type="compositionally biased region" description="Low complexity" evidence="3">
    <location>
        <begin position="74"/>
        <end position="85"/>
    </location>
</feature>
<feature type="compositionally biased region" description="Low complexity" evidence="3">
    <location>
        <begin position="93"/>
        <end position="129"/>
    </location>
</feature>
<organism>
    <name type="scientific">Schizosaccharomyces pombe (strain 972 / ATCC 24843)</name>
    <name type="common">Fission yeast</name>
    <dbReference type="NCBI Taxonomy" id="284812"/>
    <lineage>
        <taxon>Eukaryota</taxon>
        <taxon>Fungi</taxon>
        <taxon>Dikarya</taxon>
        <taxon>Ascomycota</taxon>
        <taxon>Taphrinomycotina</taxon>
        <taxon>Schizosaccharomycetes</taxon>
        <taxon>Schizosaccharomycetales</taxon>
        <taxon>Schizosaccharomycetaceae</taxon>
        <taxon>Schizosaccharomyces</taxon>
    </lineage>
</organism>
<comment type="subcellular location">
    <subcellularLocation>
        <location evidence="4">Vacuole membrane</location>
        <topology evidence="4">Single-pass membrane protein</topology>
    </subcellularLocation>
    <subcellularLocation>
        <location evidence="4">Cell membrane</location>
        <topology evidence="4">Single-pass type I membrane protein</topology>
    </subcellularLocation>
</comment>
<keyword id="KW-1003">Cell membrane</keyword>
<keyword id="KW-0436">Ligase</keyword>
<keyword id="KW-0472">Membrane</keyword>
<keyword id="KW-0479">Metal-binding</keyword>
<keyword id="KW-1185">Reference proteome</keyword>
<keyword id="KW-0812">Transmembrane</keyword>
<keyword id="KW-1133">Transmembrane helix</keyword>
<keyword id="KW-0926">Vacuole</keyword>
<keyword id="KW-0862">Zinc</keyword>
<keyword id="KW-0863">Zinc-finger</keyword>
<sequence length="556" mass="62311">MHLCNNQLLDHLDCNAVYRGYVSQENKVKRRKRLFNAIRKLWNERRRYRMPKDESISPTPISYSFRSLRRGHTSGHASEHTSSSRSSHDESDSMSSSSESDSDSVSSESNPKSYSDSSTSSARSSSTSGSISLYDDYYPAYSSNAPNTAISNYVSSGLSYYGNSSIIMNAVEYNQFFPLTITTLIVKNNKNVVSNLPKNVSFYFHSDNTVLLNEYYKSLSKLKNNFRGIIYKTTPYGSCNDTESLQVDTKGSVWFRDVSNMGSSGLIAFAPFDYCAPMHVLQAVQDRAKAILFYNASTASNSLTNFDHFEDAVDMITFETLPMALISYENGIAFEKILNEYSASSLNSVQDGGALVEYFGNIDATARLGVIISKEPKLLGLYIFIGVLLGLIGVIGLFICLHFSGAMNGFYRLLNRHGIPVQERIVNIGPNKPENRVTKEMLDTLPVRMFSGPHLANPNDELVYEKDWKLDKSESFDGQGNVVTTAERGSKYFDQRECTICLCEYSEESPLYRELPCHHIFHPACIDPYLLKNSDLCPLCKQSVTNMLENASEDNV</sequence>
<protein>
    <recommendedName>
        <fullName>Uncharacterized RING finger membrane protein C15C4.06c</fullName>
    </recommendedName>
</protein>
<gene>
    <name type="ORF">SPBC15C4.06c</name>
    <name type="ORF">SPBC21H7.01c</name>
</gene>
<evidence type="ECO:0000255" key="1"/>
<evidence type="ECO:0000255" key="2">
    <source>
        <dbReference type="PROSITE-ProRule" id="PRU00175"/>
    </source>
</evidence>
<evidence type="ECO:0000256" key="3">
    <source>
        <dbReference type="SAM" id="MobiDB-lite"/>
    </source>
</evidence>
<evidence type="ECO:0000305" key="4"/>
<proteinExistence type="predicted"/>